<organism>
    <name type="scientific">Sus scrofa</name>
    <name type="common">Pig</name>
    <dbReference type="NCBI Taxonomy" id="9823"/>
    <lineage>
        <taxon>Eukaryota</taxon>
        <taxon>Metazoa</taxon>
        <taxon>Chordata</taxon>
        <taxon>Craniata</taxon>
        <taxon>Vertebrata</taxon>
        <taxon>Euteleostomi</taxon>
        <taxon>Mammalia</taxon>
        <taxon>Eutheria</taxon>
        <taxon>Laurasiatheria</taxon>
        <taxon>Artiodactyla</taxon>
        <taxon>Suina</taxon>
        <taxon>Suidae</taxon>
        <taxon>Sus</taxon>
    </lineage>
</organism>
<evidence type="ECO:0000250" key="1"/>
<evidence type="ECO:0000250" key="2">
    <source>
        <dbReference type="UniProtKB" id="Q96C86"/>
    </source>
</evidence>
<evidence type="ECO:0000250" key="3">
    <source>
        <dbReference type="UniProtKB" id="Q9DAR7"/>
    </source>
</evidence>
<evidence type="ECO:0000256" key="4">
    <source>
        <dbReference type="SAM" id="MobiDB-lite"/>
    </source>
</evidence>
<evidence type="ECO:0000305" key="5"/>
<feature type="initiator methionine" description="Removed" evidence="2">
    <location>
        <position position="1"/>
    </location>
</feature>
<feature type="chain" id="PRO_0000109796" description="m7GpppX diphosphatase">
    <location>
        <begin position="2"/>
        <end position="337"/>
    </location>
</feature>
<feature type="region of interest" description="Disordered" evidence="4">
    <location>
        <begin position="1"/>
        <end position="37"/>
    </location>
</feature>
<feature type="short sequence motif" description="nuclear localization signal (NLS)" evidence="1">
    <location>
        <begin position="10"/>
        <end position="13"/>
    </location>
</feature>
<feature type="short sequence motif" description="nuclear export sequence (NES)" evidence="1">
    <location>
        <begin position="142"/>
        <end position="154"/>
    </location>
</feature>
<feature type="short sequence motif" description="Histidine triad motif" evidence="1">
    <location>
        <begin position="275"/>
        <end position="279"/>
    </location>
</feature>
<feature type="active site" description="Nucleophile" evidence="1">
    <location>
        <position position="277"/>
    </location>
</feature>
<feature type="binding site" evidence="1">
    <location>
        <position position="175"/>
    </location>
    <ligand>
        <name>substrate</name>
    </ligand>
</feature>
<feature type="binding site" evidence="1">
    <location>
        <position position="185"/>
    </location>
    <ligand>
        <name>substrate</name>
    </ligand>
</feature>
<feature type="binding site" evidence="1">
    <location>
        <position position="205"/>
    </location>
    <ligand>
        <name>substrate</name>
    </ligand>
</feature>
<feature type="binding site" evidence="1">
    <location>
        <position position="207"/>
    </location>
    <ligand>
        <name>substrate</name>
    </ligand>
</feature>
<feature type="binding site" evidence="1">
    <location>
        <begin position="268"/>
        <end position="279"/>
    </location>
    <ligand>
        <name>substrate</name>
    </ligand>
</feature>
<feature type="modified residue" description="N-acetylalanine" evidence="2">
    <location>
        <position position="2"/>
    </location>
</feature>
<feature type="modified residue" description="Phosphoserine" evidence="2">
    <location>
        <position position="24"/>
    </location>
</feature>
<feature type="modified residue" description="Phosphoserine" evidence="3">
    <location>
        <position position="101"/>
    </location>
</feature>
<feature type="modified residue" description="N6-acetyllysine" evidence="2">
    <location>
        <position position="138"/>
    </location>
</feature>
<feature type="modified residue" description="N6-acetyllysine" evidence="2">
    <location>
        <position position="142"/>
    </location>
</feature>
<dbReference type="EC" id="3.6.1.59" evidence="2"/>
<dbReference type="EMBL" id="AY040774">
    <property type="protein sequence ID" value="AAK91766.1"/>
    <property type="molecule type" value="mRNA"/>
</dbReference>
<dbReference type="RefSeq" id="NP_998955.1">
    <property type="nucleotide sequence ID" value="NM_213790.1"/>
</dbReference>
<dbReference type="SMR" id="Q8MIZ3"/>
<dbReference type="FunCoup" id="Q8MIZ3">
    <property type="interactions" value="1970"/>
</dbReference>
<dbReference type="STRING" id="9823.ENSSSCP00000016152"/>
<dbReference type="PaxDb" id="9823-ENSSSCP00000016152"/>
<dbReference type="PeptideAtlas" id="Q8MIZ3"/>
<dbReference type="Ensembl" id="ENSSSCT00000016597.5">
    <property type="protein sequence ID" value="ENSSSCP00000016152.2"/>
    <property type="gene ID" value="ENSSSCG00000015231.5"/>
</dbReference>
<dbReference type="Ensembl" id="ENSSSCT00015062228.1">
    <property type="protein sequence ID" value="ENSSSCP00015024969.1"/>
    <property type="gene ID" value="ENSSSCG00015046430.1"/>
</dbReference>
<dbReference type="Ensembl" id="ENSSSCT00025027502.1">
    <property type="protein sequence ID" value="ENSSSCP00025011642.1"/>
    <property type="gene ID" value="ENSSSCG00025020240.1"/>
</dbReference>
<dbReference type="Ensembl" id="ENSSSCT00030050597.1">
    <property type="protein sequence ID" value="ENSSSCP00030023004.1"/>
    <property type="gene ID" value="ENSSSCG00030036386.1"/>
</dbReference>
<dbReference type="Ensembl" id="ENSSSCT00035051756.1">
    <property type="protein sequence ID" value="ENSSSCP00035020760.1"/>
    <property type="gene ID" value="ENSSSCG00035038994.1"/>
</dbReference>
<dbReference type="Ensembl" id="ENSSSCT00045052476.1">
    <property type="protein sequence ID" value="ENSSSCP00045036490.1"/>
    <property type="gene ID" value="ENSSSCG00045030710.1"/>
</dbReference>
<dbReference type="Ensembl" id="ENSSSCT00050081451.1">
    <property type="protein sequence ID" value="ENSSSCP00050034966.1"/>
    <property type="gene ID" value="ENSSSCG00050059787.1"/>
</dbReference>
<dbReference type="Ensembl" id="ENSSSCT00055037814.1">
    <property type="protein sequence ID" value="ENSSSCP00055030053.1"/>
    <property type="gene ID" value="ENSSSCG00055019268.1"/>
</dbReference>
<dbReference type="Ensembl" id="ENSSSCT00060010183.1">
    <property type="protein sequence ID" value="ENSSSCP00060003732.1"/>
    <property type="gene ID" value="ENSSSCG00060007966.1"/>
</dbReference>
<dbReference type="Ensembl" id="ENSSSCT00065062861.1">
    <property type="protein sequence ID" value="ENSSSCP00065027226.1"/>
    <property type="gene ID" value="ENSSSCG00065045950.1"/>
</dbReference>
<dbReference type="Ensembl" id="ENSSSCT00070047666.1">
    <property type="protein sequence ID" value="ENSSSCP00070040226.1"/>
    <property type="gene ID" value="ENSSSCG00070023891.1"/>
</dbReference>
<dbReference type="Ensembl" id="ENSSSCT00070047668.1">
    <property type="protein sequence ID" value="ENSSSCP00070040228.1"/>
    <property type="gene ID" value="ENSSSCG00070023891.1"/>
</dbReference>
<dbReference type="Ensembl" id="ENSSSCT00070047672.1">
    <property type="protein sequence ID" value="ENSSSCP00070040232.1"/>
    <property type="gene ID" value="ENSSSCG00070023891.1"/>
</dbReference>
<dbReference type="Ensembl" id="ENSSSCT00115023297">
    <property type="protein sequence ID" value="ENSSSCP00115022074"/>
    <property type="gene ID" value="ENSSSCG00115013421"/>
</dbReference>
<dbReference type="GeneID" id="396689"/>
<dbReference type="KEGG" id="ssc:396689"/>
<dbReference type="CTD" id="28960"/>
<dbReference type="VGNC" id="VGNC:87189">
    <property type="gene designation" value="DCPS"/>
</dbReference>
<dbReference type="eggNOG" id="KOG3969">
    <property type="taxonomic scope" value="Eukaryota"/>
</dbReference>
<dbReference type="GeneTree" id="ENSGT00390000003924"/>
<dbReference type="HOGENOM" id="CLU_041045_2_0_1"/>
<dbReference type="InParanoid" id="Q8MIZ3"/>
<dbReference type="OMA" id="HVHINPI"/>
<dbReference type="OrthoDB" id="10264956at2759"/>
<dbReference type="TreeFam" id="TF105622"/>
<dbReference type="Reactome" id="R-SSC-429958">
    <property type="pathway name" value="mRNA decay by 3' to 5' exoribonuclease"/>
</dbReference>
<dbReference type="Proteomes" id="UP000008227">
    <property type="component" value="Chromosome 9"/>
</dbReference>
<dbReference type="Proteomes" id="UP000314985">
    <property type="component" value="Chromosome 9"/>
</dbReference>
<dbReference type="Proteomes" id="UP000694570">
    <property type="component" value="Unplaced"/>
</dbReference>
<dbReference type="Proteomes" id="UP000694571">
    <property type="component" value="Unplaced"/>
</dbReference>
<dbReference type="Proteomes" id="UP000694720">
    <property type="component" value="Unplaced"/>
</dbReference>
<dbReference type="Proteomes" id="UP000694722">
    <property type="component" value="Unplaced"/>
</dbReference>
<dbReference type="Proteomes" id="UP000694723">
    <property type="component" value="Unplaced"/>
</dbReference>
<dbReference type="Proteomes" id="UP000694724">
    <property type="component" value="Unplaced"/>
</dbReference>
<dbReference type="Proteomes" id="UP000694725">
    <property type="component" value="Unplaced"/>
</dbReference>
<dbReference type="Proteomes" id="UP000694726">
    <property type="component" value="Unplaced"/>
</dbReference>
<dbReference type="Proteomes" id="UP000694727">
    <property type="component" value="Unplaced"/>
</dbReference>
<dbReference type="Proteomes" id="UP000694728">
    <property type="component" value="Unplaced"/>
</dbReference>
<dbReference type="Bgee" id="ENSSSCG00000015231">
    <property type="expression patterns" value="Expressed in hindlimb bud and 45 other cell types or tissues"/>
</dbReference>
<dbReference type="ExpressionAtlas" id="Q8MIZ3">
    <property type="expression patterns" value="baseline and differential"/>
</dbReference>
<dbReference type="GO" id="GO:0005737">
    <property type="term" value="C:cytoplasm"/>
    <property type="evidence" value="ECO:0000250"/>
    <property type="project" value="UniProtKB"/>
</dbReference>
<dbReference type="GO" id="GO:0005829">
    <property type="term" value="C:cytosol"/>
    <property type="evidence" value="ECO:0007669"/>
    <property type="project" value="Ensembl"/>
</dbReference>
<dbReference type="GO" id="GO:0005739">
    <property type="term" value="C:mitochondrion"/>
    <property type="evidence" value="ECO:0007669"/>
    <property type="project" value="Ensembl"/>
</dbReference>
<dbReference type="GO" id="GO:0005654">
    <property type="term" value="C:nucleoplasm"/>
    <property type="evidence" value="ECO:0007669"/>
    <property type="project" value="Ensembl"/>
</dbReference>
<dbReference type="GO" id="GO:0005634">
    <property type="term" value="C:nucleus"/>
    <property type="evidence" value="ECO:0000250"/>
    <property type="project" value="UniProtKB"/>
</dbReference>
<dbReference type="GO" id="GO:0000932">
    <property type="term" value="C:P-body"/>
    <property type="evidence" value="ECO:0000318"/>
    <property type="project" value="GO_Central"/>
</dbReference>
<dbReference type="GO" id="GO:0140932">
    <property type="term" value="F:5'-(N(7)-methyl 5'-triphosphoguanosine)-[mRNA] diphosphatase activity"/>
    <property type="evidence" value="ECO:0000250"/>
    <property type="project" value="UniProtKB"/>
</dbReference>
<dbReference type="GO" id="GO:0042802">
    <property type="term" value="F:identical protein binding"/>
    <property type="evidence" value="ECO:0007669"/>
    <property type="project" value="Ensembl"/>
</dbReference>
<dbReference type="GO" id="GO:0000340">
    <property type="term" value="F:RNA 7-methylguanosine cap binding"/>
    <property type="evidence" value="ECO:0000250"/>
    <property type="project" value="UniProtKB"/>
</dbReference>
<dbReference type="GO" id="GO:0000290">
    <property type="term" value="P:deadenylation-dependent decapping of nuclear-transcribed mRNA"/>
    <property type="evidence" value="ECO:0000318"/>
    <property type="project" value="GO_Central"/>
</dbReference>
<dbReference type="GO" id="GO:0045292">
    <property type="term" value="P:mRNA cis splicing, via spliceosome"/>
    <property type="evidence" value="ECO:0000250"/>
    <property type="project" value="UniProtKB"/>
</dbReference>
<dbReference type="FunFam" id="3.30.200.40:FF:000001">
    <property type="entry name" value="m7GpppX diphosphatase"/>
    <property type="match status" value="1"/>
</dbReference>
<dbReference type="FunFam" id="3.30.428.10:FF:000006">
    <property type="entry name" value="m7GpppX diphosphatase"/>
    <property type="match status" value="1"/>
</dbReference>
<dbReference type="Gene3D" id="3.30.428.10">
    <property type="entry name" value="HIT-like"/>
    <property type="match status" value="1"/>
</dbReference>
<dbReference type="Gene3D" id="3.30.200.40">
    <property type="entry name" value="Scavenger mRNA decapping enzyme, N-terminal domain"/>
    <property type="match status" value="1"/>
</dbReference>
<dbReference type="InterPro" id="IPR008594">
    <property type="entry name" value="DcpS/DCS2"/>
</dbReference>
<dbReference type="InterPro" id="IPR019808">
    <property type="entry name" value="Histidine_triad_CS"/>
</dbReference>
<dbReference type="InterPro" id="IPR036265">
    <property type="entry name" value="HIT-like_sf"/>
</dbReference>
<dbReference type="InterPro" id="IPR011145">
    <property type="entry name" value="Scavenger_mRNA_decap_enz_N"/>
</dbReference>
<dbReference type="PANTHER" id="PTHR12978">
    <property type="entry name" value="HISTIDINE TRIAD HIT PROTEIN MEMBER"/>
    <property type="match status" value="1"/>
</dbReference>
<dbReference type="PANTHER" id="PTHR12978:SF0">
    <property type="entry name" value="M7GPPPX DIPHOSPHATASE"/>
    <property type="match status" value="1"/>
</dbReference>
<dbReference type="Pfam" id="PF05652">
    <property type="entry name" value="DcpS"/>
    <property type="match status" value="1"/>
</dbReference>
<dbReference type="Pfam" id="PF11969">
    <property type="entry name" value="DcpS_C"/>
    <property type="match status" value="1"/>
</dbReference>
<dbReference type="PIRSF" id="PIRSF028973">
    <property type="entry name" value="Scavenger_mRNA_decap_enz"/>
    <property type="match status" value="1"/>
</dbReference>
<dbReference type="SUPFAM" id="SSF54197">
    <property type="entry name" value="HIT-like"/>
    <property type="match status" value="1"/>
</dbReference>
<dbReference type="SUPFAM" id="SSF102860">
    <property type="entry name" value="mRNA decapping enzyme DcpS N-terminal domain"/>
    <property type="match status" value="1"/>
</dbReference>
<dbReference type="PROSITE" id="PS00892">
    <property type="entry name" value="HIT_1"/>
    <property type="match status" value="1"/>
</dbReference>
<gene>
    <name type="primary">DCPS</name>
    <name type="synonym">DCS1</name>
    <name type="synonym">HINT5</name>
</gene>
<sequence>MADTAPQPSKRKRERDPEEAEAPSTEEKEARVGNGTSAPVRLPFSGFRVKKVLRESARDKIIFLHGKVNEASGDGDGEDAIVILEKTPFQVDQVAQLLMGSPELQLQFSNDIYSTYHLFPPRQLSDVKTTVVYPATEKHLQKYLHQDLHLVRETGGDYKNITLPHLESQSLSIQWVYNILDKKAEADRIVFENPDPSDGFVLIPDLKWNQKQLDDLYLIAICHRRGIKSLRDLTPEHLPLLRNILREGQEAILQRYQVTGDRLRVYLHYLPSYYHLHVHFTALGFEAPGAGVERAHLLAEVIENLEQDPEHYQRRTLTFALRADDPLLTLLQEAQRS</sequence>
<comment type="function">
    <text evidence="1">Decapping scavenger enzyme that catalyzes the cleavage of a residual cap structure following the degradation of mRNAs by the 3'-&gt;5' exosome-mediated mRNA decay pathway. Hydrolyzes cap analog structures like 7-methylguanosine nucleoside triphosphate (m7GpppG) with up to 10 nucleotide substrates (small capped oligoribonucleotides) and specifically releases 5'-phosphorylated RNA fragments and 7-methylguanosine monophosphate (m7GMP). Cleaves cap analog structures like tri-methyl guanosine nucleoside triphosphate (m3(2,2,7)GpppG) with very poor efficiency. Does not hydrolyze unmethylated cap analog (GpppG) and shows no decapping activity on intact m7GpppG-capped mRNA molecules longer than 25 nucleotides. Does not hydrolyze 7-methylguanosine diphosphate (m7GDP) to m7GMP. May also play a role in the 5'-&gt;3 mRNA decay pathway; m7GDP, the downstream product released by the 5'-&gt;3' mRNA mediated decapping activity, may be also converted by DCPS to m7GMP. Binds to m7GpppG and strongly to m7GDP. Plays a role in first intron splicing of pre-mRNAs. Inhibits activation-induced cell death.</text>
</comment>
<comment type="catalytic activity">
    <reaction evidence="2">
        <text>a 5'-end (N(7)-methyl 5'-triphosphoguanosine)-ribonucleoside in mRNA + H2O = N(7)-methyl-GMP + a 5'-end diphospho-ribonucleoside in mRNA + 2 H(+)</text>
        <dbReference type="Rhea" id="RHEA:65388"/>
        <dbReference type="Rhea" id="RHEA-COMP:17165"/>
        <dbReference type="Rhea" id="RHEA-COMP:17167"/>
        <dbReference type="ChEBI" id="CHEBI:15377"/>
        <dbReference type="ChEBI" id="CHEBI:15378"/>
        <dbReference type="ChEBI" id="CHEBI:58285"/>
        <dbReference type="ChEBI" id="CHEBI:156461"/>
        <dbReference type="ChEBI" id="CHEBI:167616"/>
        <dbReference type="EC" id="3.6.1.59"/>
    </reaction>
</comment>
<comment type="activity regulation">
    <text evidence="1">The hydrolytic product 7-methylguanosine diphosphate (m7GDP) efficiently inhibits the decapping scavenger activity and acts as a competitive inhibitor in vitro. Inhibited by 2,4-diaminoquinazoline.</text>
</comment>
<comment type="subunit">
    <text evidence="1">Homodimer. Associates with components of the exosome multienzyme ribonuclease complex, such as EXOSC3 and EXOSC4. Interacts with NDOR1.</text>
</comment>
<comment type="subcellular location">
    <subcellularLocation>
        <location evidence="1">Cytoplasm</location>
    </subcellularLocation>
    <subcellularLocation>
        <location evidence="1">Nucleus</location>
    </subcellularLocation>
    <text evidence="1">Predominantly localized in the nucleus. Nucleocytoplasmic shuttling protein that can transiently enter the cytoplasm in mammalian cells in a XPO1/CRM1-dependent manner.</text>
</comment>
<comment type="domain">
    <text evidence="1">The C-terminal histidine triad (HIT) motif and the N-terminal domain are required for the decapping activity. The N-terminus is necessary but not sufficient for binding cap structures.</text>
</comment>
<comment type="similarity">
    <text evidence="5">Belongs to the HIT family.</text>
</comment>
<protein>
    <recommendedName>
        <fullName>m7GpppX diphosphatase</fullName>
        <ecNumber evidence="2">3.6.1.59</ecNumber>
    </recommendedName>
    <alternativeName>
        <fullName>DCS-1</fullName>
    </alternativeName>
    <alternativeName>
        <fullName>Decapping scavenger enzyme</fullName>
    </alternativeName>
    <alternativeName>
        <fullName>Hint-related 7meGMP-directed hydrolase</fullName>
    </alternativeName>
    <alternativeName>
        <fullName>Histidine triad nucleotide-binding protein 5</fullName>
    </alternativeName>
    <alternativeName>
        <fullName>Histidine triad protein member 5</fullName>
        <shortName>HINT-5</shortName>
    </alternativeName>
    <alternativeName>
        <fullName>Scavenger mRNA-decapping enzyme DcpS</fullName>
    </alternativeName>
</protein>
<reference key="1">
    <citation type="submission" date="2001-06" db="EMBL/GenBank/DDBJ databases">
        <title>Cloning and characterization of a novel member of the histidine triad protein family (HINT-5) in different vertebrate species.</title>
        <authorList>
            <person name="Huang C.-H."/>
            <person name="Peng J."/>
            <person name="Chen H."/>
            <person name="Chen Y."/>
        </authorList>
    </citation>
    <scope>NUCLEOTIDE SEQUENCE [MRNA]</scope>
</reference>
<name>DCPS_PIG</name>
<proteinExistence type="evidence at transcript level"/>
<keyword id="KW-0007">Acetylation</keyword>
<keyword id="KW-0963">Cytoplasm</keyword>
<keyword id="KW-0378">Hydrolase</keyword>
<keyword id="KW-0507">mRNA processing</keyword>
<keyword id="KW-0508">mRNA splicing</keyword>
<keyword id="KW-0539">Nucleus</keyword>
<keyword id="KW-0597">Phosphoprotein</keyword>
<keyword id="KW-1185">Reference proteome</keyword>
<accession>Q8MIZ3</accession>